<dbReference type="EC" id="1.97.1.12" evidence="1"/>
<dbReference type="EMBL" id="CP000111">
    <property type="protein sequence ID" value="ABB50675.1"/>
    <property type="molecule type" value="Genomic_DNA"/>
</dbReference>
<dbReference type="RefSeq" id="WP_011377157.1">
    <property type="nucleotide sequence ID" value="NC_007577.1"/>
</dbReference>
<dbReference type="SMR" id="Q318M0"/>
<dbReference type="STRING" id="74546.PMT9312_1615"/>
<dbReference type="KEGG" id="pmi:PMT9312_1615"/>
<dbReference type="eggNOG" id="COG2885">
    <property type="taxonomic scope" value="Bacteria"/>
</dbReference>
<dbReference type="HOGENOM" id="CLU_016126_1_0_3"/>
<dbReference type="OrthoDB" id="499313at2"/>
<dbReference type="Proteomes" id="UP000002715">
    <property type="component" value="Chromosome"/>
</dbReference>
<dbReference type="GO" id="GO:0009522">
    <property type="term" value="C:photosystem I"/>
    <property type="evidence" value="ECO:0007669"/>
    <property type="project" value="UniProtKB-KW"/>
</dbReference>
<dbReference type="GO" id="GO:0031676">
    <property type="term" value="C:plasma membrane-derived thylakoid membrane"/>
    <property type="evidence" value="ECO:0007669"/>
    <property type="project" value="UniProtKB-SubCell"/>
</dbReference>
<dbReference type="GO" id="GO:0051539">
    <property type="term" value="F:4 iron, 4 sulfur cluster binding"/>
    <property type="evidence" value="ECO:0007669"/>
    <property type="project" value="UniProtKB-KW"/>
</dbReference>
<dbReference type="GO" id="GO:0016168">
    <property type="term" value="F:chlorophyll binding"/>
    <property type="evidence" value="ECO:0007669"/>
    <property type="project" value="UniProtKB-KW"/>
</dbReference>
<dbReference type="GO" id="GO:0009055">
    <property type="term" value="F:electron transfer activity"/>
    <property type="evidence" value="ECO:0007669"/>
    <property type="project" value="UniProtKB-UniRule"/>
</dbReference>
<dbReference type="GO" id="GO:0000287">
    <property type="term" value="F:magnesium ion binding"/>
    <property type="evidence" value="ECO:0007669"/>
    <property type="project" value="UniProtKB-UniRule"/>
</dbReference>
<dbReference type="GO" id="GO:0016491">
    <property type="term" value="F:oxidoreductase activity"/>
    <property type="evidence" value="ECO:0007669"/>
    <property type="project" value="UniProtKB-KW"/>
</dbReference>
<dbReference type="GO" id="GO:0015979">
    <property type="term" value="P:photosynthesis"/>
    <property type="evidence" value="ECO:0007669"/>
    <property type="project" value="UniProtKB-UniRule"/>
</dbReference>
<dbReference type="FunFam" id="1.20.1130.10:FF:000001">
    <property type="entry name" value="Photosystem I P700 chlorophyll a apoprotein A2"/>
    <property type="match status" value="1"/>
</dbReference>
<dbReference type="Gene3D" id="1.20.1130.10">
    <property type="entry name" value="Photosystem I PsaA/PsaB"/>
    <property type="match status" value="1"/>
</dbReference>
<dbReference type="HAMAP" id="MF_00482">
    <property type="entry name" value="PSI_PsaB"/>
    <property type="match status" value="1"/>
</dbReference>
<dbReference type="InterPro" id="IPR001280">
    <property type="entry name" value="PSI_PsaA/B"/>
</dbReference>
<dbReference type="InterPro" id="IPR020586">
    <property type="entry name" value="PSI_PsaA/B_CS"/>
</dbReference>
<dbReference type="InterPro" id="IPR036408">
    <property type="entry name" value="PSI_PsaA/B_sf"/>
</dbReference>
<dbReference type="InterPro" id="IPR006244">
    <property type="entry name" value="PSI_PsaB"/>
</dbReference>
<dbReference type="NCBIfam" id="TIGR01336">
    <property type="entry name" value="psaB"/>
    <property type="match status" value="1"/>
</dbReference>
<dbReference type="PANTHER" id="PTHR30128">
    <property type="entry name" value="OUTER MEMBRANE PROTEIN, OMPA-RELATED"/>
    <property type="match status" value="1"/>
</dbReference>
<dbReference type="PANTHER" id="PTHR30128:SF19">
    <property type="entry name" value="PHOTOSYSTEM I P700 CHLOROPHYLL A APOPROTEIN A1-RELATED"/>
    <property type="match status" value="1"/>
</dbReference>
<dbReference type="Pfam" id="PF00223">
    <property type="entry name" value="PsaA_PsaB"/>
    <property type="match status" value="1"/>
</dbReference>
<dbReference type="PIRSF" id="PIRSF002905">
    <property type="entry name" value="PSI_A"/>
    <property type="match status" value="1"/>
</dbReference>
<dbReference type="PRINTS" id="PR00257">
    <property type="entry name" value="PHOTSYSPSAAB"/>
</dbReference>
<dbReference type="SUPFAM" id="SSF81558">
    <property type="entry name" value="Photosystem I subunits PsaA/PsaB"/>
    <property type="match status" value="1"/>
</dbReference>
<dbReference type="PROSITE" id="PS00419">
    <property type="entry name" value="PHOTOSYSTEM_I_PSAAB"/>
    <property type="match status" value="1"/>
</dbReference>
<reference key="1">
    <citation type="journal article" date="2006" name="Science">
        <title>Genomic islands and the ecology and evolution of Prochlorococcus.</title>
        <authorList>
            <person name="Coleman M.L."/>
            <person name="Sullivan M.B."/>
            <person name="Martiny A.C."/>
            <person name="Steglich C."/>
            <person name="Barry K."/>
            <person name="Delong E.F."/>
            <person name="Chisholm S.W."/>
        </authorList>
    </citation>
    <scope>NUCLEOTIDE SEQUENCE [LARGE SCALE GENOMIC DNA]</scope>
    <source>
        <strain>MIT 9312</strain>
    </source>
</reference>
<organism>
    <name type="scientific">Prochlorococcus marinus (strain MIT 9312)</name>
    <dbReference type="NCBI Taxonomy" id="74546"/>
    <lineage>
        <taxon>Bacteria</taxon>
        <taxon>Bacillati</taxon>
        <taxon>Cyanobacteriota</taxon>
        <taxon>Cyanophyceae</taxon>
        <taxon>Synechococcales</taxon>
        <taxon>Prochlorococcaceae</taxon>
        <taxon>Prochlorococcus</taxon>
    </lineage>
</organism>
<proteinExistence type="inferred from homology"/>
<gene>
    <name evidence="1" type="primary">psaB</name>
    <name type="ordered locus">PMT9312_1615</name>
</gene>
<feature type="chain" id="PRO_0000300019" description="Photosystem I P700 chlorophyll a apoprotein A2">
    <location>
        <begin position="1"/>
        <end position="742"/>
    </location>
</feature>
<feature type="transmembrane region" description="Helical; Name=I" evidence="1">
    <location>
        <begin position="46"/>
        <end position="69"/>
    </location>
</feature>
<feature type="transmembrane region" description="Helical; Name=II" evidence="1">
    <location>
        <begin position="135"/>
        <end position="158"/>
    </location>
</feature>
<feature type="transmembrane region" description="Helical; Name=III" evidence="1">
    <location>
        <begin position="175"/>
        <end position="199"/>
    </location>
</feature>
<feature type="transmembrane region" description="Helical; Name=IV" evidence="1">
    <location>
        <begin position="273"/>
        <end position="291"/>
    </location>
</feature>
<feature type="transmembrane region" description="Helical; Name=V" evidence="1">
    <location>
        <begin position="336"/>
        <end position="359"/>
    </location>
</feature>
<feature type="transmembrane region" description="Helical; Name=VI" evidence="1">
    <location>
        <begin position="375"/>
        <end position="401"/>
    </location>
</feature>
<feature type="transmembrane region" description="Helical; Name=VII" evidence="1">
    <location>
        <begin position="423"/>
        <end position="445"/>
    </location>
</feature>
<feature type="transmembrane region" description="Helical; Name=VIII" evidence="1">
    <location>
        <begin position="525"/>
        <end position="543"/>
    </location>
</feature>
<feature type="transmembrane region" description="Helical; Name=IX" evidence="1">
    <location>
        <begin position="583"/>
        <end position="604"/>
    </location>
</feature>
<feature type="transmembrane region" description="Helical; Name=X" evidence="1">
    <location>
        <begin position="651"/>
        <end position="673"/>
    </location>
</feature>
<feature type="transmembrane region" description="Helical; Name=XI" evidence="1">
    <location>
        <begin position="715"/>
        <end position="735"/>
    </location>
</feature>
<feature type="binding site" evidence="1">
    <location>
        <position position="567"/>
    </location>
    <ligand>
        <name>[4Fe-4S] cluster</name>
        <dbReference type="ChEBI" id="CHEBI:49883"/>
        <note>ligand shared between dimeric partners</note>
    </ligand>
</feature>
<feature type="binding site" evidence="1">
    <location>
        <position position="576"/>
    </location>
    <ligand>
        <name>[4Fe-4S] cluster</name>
        <dbReference type="ChEBI" id="CHEBI:49883"/>
        <note>ligand shared between dimeric partners</note>
    </ligand>
</feature>
<feature type="binding site" description="axial binding residue" evidence="1">
    <location>
        <position position="662"/>
    </location>
    <ligand>
        <name>divinyl chlorophyll a</name>
        <dbReference type="ChEBI" id="CHEBI:73095"/>
        <label>B1</label>
    </ligand>
    <ligandPart>
        <name>Mg</name>
        <dbReference type="ChEBI" id="CHEBI:25107"/>
    </ligandPart>
</feature>
<feature type="binding site" description="axial binding residue" evidence="1">
    <location>
        <position position="670"/>
    </location>
    <ligand>
        <name>divinyl chlorophyll a</name>
        <dbReference type="ChEBI" id="CHEBI:73095"/>
        <label>B3</label>
    </ligand>
    <ligandPart>
        <name>Mg</name>
        <dbReference type="ChEBI" id="CHEBI:25107"/>
    </ligandPart>
</feature>
<feature type="binding site" evidence="1">
    <location>
        <position position="678"/>
    </location>
    <ligand>
        <name>divinyl chlorophyll a</name>
        <dbReference type="ChEBI" id="CHEBI:73095"/>
        <label>B3</label>
    </ligand>
</feature>
<feature type="binding site" evidence="1">
    <location>
        <position position="679"/>
    </location>
    <ligand>
        <name>phylloquinone</name>
        <dbReference type="ChEBI" id="CHEBI:18067"/>
        <label>B</label>
    </ligand>
</feature>
<name>PSAB_PROM9</name>
<sequence length="742" mass="82812">MATKFPSFNQGLAQDPTTRRIWYGIATAHDFESHDGMTEEKLYQKLFSTHFGHLAIIALWVAGNLFHVAWQGNFEQFVLDPTHVRPIAHAIWDPHFGEGITEAMTQAGANGPVNIAYSGLYHWWYTIGMRTNEQLFQASIFMSILACWVLFAGWLHLQPKFRPTLAWFKNAEAQLNHHLSVLFGFSSIAWTGHLVHVAIPESRGQHVGWDNWLTVLPHPAGLAPFFTLNWGAYAQNPDSLDQVFGTAEGAGTAIFTFLGGLHPQSEALWLTDIAHHHIAIGCVFVIAGHMYRNTFGIGHSLKEITEAHNTRHPNDPHKGSFGISHDGIYETVNNSLHFQLGLALASLGVATSLVAQHMGALPSYAFIARDYTTQSALYTHHQYIAMFLMVGAFAHGAIFFVRDYDPEVNKDNVLARVLGTKEALISHLSWVTMLLGFHTLGIYVHNDVVVAFGNPEKQILIEPVFAQFVQAAQGKMMYGFDALLSDPTSSATIAANSMPGNHYWMDLINRQDALSSFLPIGPADFLVHHAIALGLHTTALILIKGALDARGTKLIPDKKDLGYAFPCDGPGRGGTCDSSSWDAMYLAMFWALNLIAWVTFYWHWKHLTIWQGNMAQFNESGTYLMGWFRDYLWLNSSQLINGYNPFGVNSLSPWAWMFLFGHLVWATGFMFLISWRGYWQELIETLVWAHQRTPIANLVGWRDKPVALSIVQARLVGLAHFTIGNILTFGAFVIASTSGKFG</sequence>
<comment type="function">
    <text evidence="1">PsaA and PsaB bind P700, the primary electron donor of photosystem I (PSI), as well as the electron acceptors A0, A1 and FX. PSI is a plastocyanin/cytochrome c6-ferredoxin oxidoreductase, converting photonic excitation into a charge separation, which transfers an electron from the donor P700 chlorophyll pair to the spectroscopically characterized acceptors A0, A1, FX, FA and FB in turn. Oxidized P700 is reduced on the lumenal side of the thylakoid membrane by plastocyanin or cytochrome c6.</text>
</comment>
<comment type="catalytic activity">
    <reaction evidence="1">
        <text>reduced [plastocyanin] + hnu + oxidized [2Fe-2S]-[ferredoxin] = oxidized [plastocyanin] + reduced [2Fe-2S]-[ferredoxin]</text>
        <dbReference type="Rhea" id="RHEA:30407"/>
        <dbReference type="Rhea" id="RHEA-COMP:10000"/>
        <dbReference type="Rhea" id="RHEA-COMP:10001"/>
        <dbReference type="Rhea" id="RHEA-COMP:10039"/>
        <dbReference type="Rhea" id="RHEA-COMP:10040"/>
        <dbReference type="ChEBI" id="CHEBI:29036"/>
        <dbReference type="ChEBI" id="CHEBI:30212"/>
        <dbReference type="ChEBI" id="CHEBI:33737"/>
        <dbReference type="ChEBI" id="CHEBI:33738"/>
        <dbReference type="ChEBI" id="CHEBI:49552"/>
        <dbReference type="EC" id="1.97.1.12"/>
    </reaction>
</comment>
<comment type="cofactor">
    <text evidence="1">PSI electron transfer chain: 5 divinyl chlorophyll a, 1 divinyl chlorophyll a', 2 phylloquinones and 3 4Fe-4S clusters. PSI core antenna: 90 divinyl chlorophyll a, 22 carotenoids, 3 phospholipids and 1 galactolipid. P700 is a divinyl chlorophyll a/divinyl chlorophyll a' dimer, A0 is one or more divinyl chlorophyll a, A1 is one or both phylloquinones and FX is a shared 4Fe-4S iron-sulfur center.</text>
</comment>
<comment type="subunit">
    <text evidence="1">The PsaA/B heterodimer binds the P700 divinyl chlorophyll special pair and subsequent electron acceptors. PSI consists of a core antenna complex that captures photons, and an electron transfer chain that converts photonic excitation into a charge separation. The cyanobacterial PSI reaction center is composed of one copy each of PsaA,B,C,D,E,F,I,J,K,L,M and X, and forms trimeric complexes.</text>
</comment>
<comment type="subcellular location">
    <subcellularLocation>
        <location evidence="1">Cellular thylakoid membrane</location>
        <topology evidence="1">Multi-pass membrane protein</topology>
    </subcellularLocation>
</comment>
<comment type="similarity">
    <text evidence="1">Belongs to the PsaA/PsaB family.</text>
</comment>
<protein>
    <recommendedName>
        <fullName evidence="1">Photosystem I P700 chlorophyll a apoprotein A2</fullName>
        <ecNumber evidence="1">1.97.1.12</ecNumber>
    </recommendedName>
    <alternativeName>
        <fullName evidence="1">PsaB</fullName>
    </alternativeName>
</protein>
<evidence type="ECO:0000255" key="1">
    <source>
        <dbReference type="HAMAP-Rule" id="MF_00482"/>
    </source>
</evidence>
<keyword id="KW-0004">4Fe-4S</keyword>
<keyword id="KW-0148">Chlorophyll</keyword>
<keyword id="KW-0157">Chromophore</keyword>
<keyword id="KW-0249">Electron transport</keyword>
<keyword id="KW-0408">Iron</keyword>
<keyword id="KW-0411">Iron-sulfur</keyword>
<keyword id="KW-0460">Magnesium</keyword>
<keyword id="KW-0472">Membrane</keyword>
<keyword id="KW-0479">Metal-binding</keyword>
<keyword id="KW-0560">Oxidoreductase</keyword>
<keyword id="KW-0602">Photosynthesis</keyword>
<keyword id="KW-0603">Photosystem I</keyword>
<keyword id="KW-0793">Thylakoid</keyword>
<keyword id="KW-0812">Transmembrane</keyword>
<keyword id="KW-1133">Transmembrane helix</keyword>
<keyword id="KW-0813">Transport</keyword>
<accession>Q318M0</accession>